<reference key="1">
    <citation type="journal article" date="2003" name="Proc. Natl. Acad. Sci. U.S.A.">
        <title>The complete genome sequence of Mycobacterium bovis.</title>
        <authorList>
            <person name="Garnier T."/>
            <person name="Eiglmeier K."/>
            <person name="Camus J.-C."/>
            <person name="Medina N."/>
            <person name="Mansoor H."/>
            <person name="Pryor M."/>
            <person name="Duthoy S."/>
            <person name="Grondin S."/>
            <person name="Lacroix C."/>
            <person name="Monsempe C."/>
            <person name="Simon S."/>
            <person name="Harris B."/>
            <person name="Atkin R."/>
            <person name="Doggett J."/>
            <person name="Mayes R."/>
            <person name="Keating L."/>
            <person name="Wheeler P.R."/>
            <person name="Parkhill J."/>
            <person name="Barrell B.G."/>
            <person name="Cole S.T."/>
            <person name="Gordon S.V."/>
            <person name="Hewinson R.G."/>
        </authorList>
    </citation>
    <scope>NUCLEOTIDE SEQUENCE [LARGE SCALE GENOMIC DNA]</scope>
    <source>
        <strain>ATCC BAA-935 / AF2122/97</strain>
    </source>
</reference>
<reference key="2">
    <citation type="journal article" date="2017" name="Genome Announc.">
        <title>Updated reference genome sequence and annotation of Mycobacterium bovis AF2122/97.</title>
        <authorList>
            <person name="Malone K.M."/>
            <person name="Farrell D."/>
            <person name="Stuber T.P."/>
            <person name="Schubert O.T."/>
            <person name="Aebersold R."/>
            <person name="Robbe-Austerman S."/>
            <person name="Gordon S.V."/>
        </authorList>
    </citation>
    <scope>NUCLEOTIDE SEQUENCE [LARGE SCALE GENOMIC DNA]</scope>
    <scope>GENOME REANNOTATION</scope>
    <source>
        <strain>ATCC BAA-935 / AF2122/97</strain>
    </source>
</reference>
<protein>
    <recommendedName>
        <fullName>Lysylphosphatidylglycerol biosynthesis bifunctional protein LysX</fullName>
    </recommendedName>
    <domain>
        <recommendedName>
            <fullName>Lysine--tRNA ligase</fullName>
            <ecNumber>6.1.1.6</ecNumber>
        </recommendedName>
        <alternativeName>
            <fullName>Lysyl-tRNA synthetase</fullName>
            <shortName>LysRS</shortName>
        </alternativeName>
    </domain>
    <domain>
        <recommendedName>
            <fullName>Phosphatidylglycerol lysyltransferase</fullName>
            <ecNumber>2.3.2.3</ecNumber>
        </recommendedName>
        <alternativeName>
            <fullName>Lysylphosphatidylglycerol synthetase</fullName>
            <shortName>LPG synthetase</shortName>
        </alternativeName>
    </domain>
</protein>
<proteinExistence type="inferred from homology"/>
<organism>
    <name type="scientific">Mycobacterium bovis (strain ATCC BAA-935 / AF2122/97)</name>
    <dbReference type="NCBI Taxonomy" id="233413"/>
    <lineage>
        <taxon>Bacteria</taxon>
        <taxon>Bacillati</taxon>
        <taxon>Actinomycetota</taxon>
        <taxon>Actinomycetes</taxon>
        <taxon>Mycobacteriales</taxon>
        <taxon>Mycobacteriaceae</taxon>
        <taxon>Mycobacterium</taxon>
        <taxon>Mycobacterium tuberculosis complex</taxon>
    </lineage>
</organism>
<sequence length="1172" mass="128182">MGLHLTVPGLRRDGRGVQSNSHDTSSKTTADISRCPQHTDAGLQRAATPGISRLLGISSRSVTLTKPRSATRGNSRYHWVPAAAGWTVGVIATLSLLASVSPLIRWIIKVPREFINDYLFNFPDTNFAWSFVLALLAAALTARKRIAWLVLLANMVLAAVVNAAEIAAGGNTAAESFGENLGFAVHVVAIVVLVLGYREFWAKVRRGALFRAAAVWLAGAVVGIVASWGLVELFPGSLAPDERLGYAANRVVGFALADPDLFTGRPHVFLNAIFGLFGAFALIGAAIVLFLSQRADNALTGEDESAIRGLLDLYGKDDSLGYFATRRDKSVVFASSGRACITYRVEVGVCLASGDPVGDHRAWPQAVDAWLRLCQTYGWAPGVMGASSQGAQTYREAGLTALELGDEAILRPADFKLSGPEMRGVRQAVTRARRAGLTVRIRRHRDIAEDEMAQTITRADSWRDTETERGFSMALGRLGDPADSDCLLVEAIDPHNQVLAMLSLVPWGTTGVSLDLMRRSPQSPNGTIELMVSELALHAESLGITRISLNFAVFRAAFEQGAQLGAGPVARLWRGLLVFFSRWWQLETLYRSNMKYQPEWVPRYACYEDARVIPRVGVASVIAEGFLVLPFSRRNRVHTGHHPAVPERLAATGLLHHDGSAPDVSGLRQVGLTNGDGVERRLPEQVRVRFDKLEKLRSSGIDAFPVGRPPSHTVAQALAADHQASVSVSGRIMRIRNYGGVLFAQLRDWSGEMQVLLDNSRLDQGCAADFNAATDLGDLVEMTGHMGASKTGTPSLIVSGWRLIGKCLRPLPNKWKGLLDPEARVRTRYLDLAVNAESRALITARSSVLRAVRETLFAKGFVEVETPILQQLHGGATARPFVTHINTYSMDLFLRIAPELYLKRLCVGGVERVFELGRAFRNEGVDFSHNPEFTLLEAYQAHAGYLEWIDGCRELIQNAAQAANGAPIAMRPRTDKGSDGTRHHLEPVDISGIWPVRTVHDAISEALGERIDADTGLTTLRKLCDAAGVPYRTQWDAGAVVLELYEHLVECRTEQPTFYIDFPTSVSPLTRPHRSKRGVAERWDLVAWGIELGTAYSELTDPVEQRRRLQEQSLLAAGGDPEAMELDEDFLQAMEYAMPPTGGLGMGIDRVVMLITGRSIRETLPFPLAKPH</sequence>
<name>LYSX_MYCBO</name>
<feature type="chain" id="PRO_0000152656" description="Lysylphosphatidylglycerol biosynthesis bifunctional protein LysX">
    <location>
        <begin position="1"/>
        <end position="1172"/>
    </location>
</feature>
<feature type="transmembrane region" description="Helical" evidence="2">
    <location>
        <begin position="80"/>
        <end position="100"/>
    </location>
</feature>
<feature type="transmembrane region" description="Helical" evidence="2">
    <location>
        <begin position="122"/>
        <end position="142"/>
    </location>
</feature>
<feature type="transmembrane region" description="Helical" evidence="2">
    <location>
        <begin position="146"/>
        <end position="166"/>
    </location>
</feature>
<feature type="transmembrane region" description="Helical" evidence="2">
    <location>
        <begin position="177"/>
        <end position="197"/>
    </location>
</feature>
<feature type="transmembrane region" description="Helical" evidence="2">
    <location>
        <begin position="214"/>
        <end position="234"/>
    </location>
</feature>
<feature type="transmembrane region" description="Helical" evidence="2">
    <location>
        <begin position="272"/>
        <end position="292"/>
    </location>
</feature>
<feature type="transmembrane region" description="Helical" evidence="2">
    <location>
        <begin position="612"/>
        <end position="632"/>
    </location>
</feature>
<feature type="DNA-binding region" description="OB">
    <location>
        <begin position="726"/>
        <end position="804"/>
    </location>
</feature>
<feature type="region of interest" description="Phosphatidylglycerol lysyltransferase">
    <location>
        <begin position="1"/>
        <end position="663"/>
    </location>
</feature>
<feature type="region of interest" description="Disordered" evidence="3">
    <location>
        <begin position="1"/>
        <end position="34"/>
    </location>
</feature>
<feature type="region of interest" description="Lysine--tRNA ligase">
    <location>
        <begin position="664"/>
        <end position="1172"/>
    </location>
</feature>
<feature type="compositionally biased region" description="Polar residues" evidence="3">
    <location>
        <begin position="17"/>
        <end position="31"/>
    </location>
</feature>
<feature type="binding site" evidence="1">
    <location>
        <position position="1084"/>
    </location>
    <ligand>
        <name>Mg(2+)</name>
        <dbReference type="ChEBI" id="CHEBI:18420"/>
        <label>1</label>
    </ligand>
</feature>
<feature type="binding site" evidence="1">
    <location>
        <position position="1091"/>
    </location>
    <ligand>
        <name>Mg(2+)</name>
        <dbReference type="ChEBI" id="CHEBI:18420"/>
        <label>1</label>
    </ligand>
</feature>
<feature type="binding site" evidence="1">
    <location>
        <position position="1091"/>
    </location>
    <ligand>
        <name>Mg(2+)</name>
        <dbReference type="ChEBI" id="CHEBI:18420"/>
        <label>2</label>
    </ligand>
</feature>
<comment type="function">
    <text evidence="1">Catalyzes the production of L-lysyl-tRNA(Lys)transfer and the transfer of a lysyl group from L-lysyl-tRNA(Lys) to membrane-bound phosphatidylglycerol (PG), which produces lysylphosphatidylglycerol (LPG), one of the components of the bacterial membrane with a positive net charge. LPG synthesis contributes to the resistance to cationic antimicrobial peptides (CAMPs) and likely protects M.tuberculosis against the CAMPs produced by competiting microorganisms (bacteriocins). In fact, the modification of anionic phosphatidylglycerol with positively charged L-lysine results in repulsion of the peptides (By similarity).</text>
</comment>
<comment type="catalytic activity">
    <reaction>
        <text>tRNA(Lys) + L-lysine + ATP = L-lysyl-tRNA(Lys) + AMP + diphosphate</text>
        <dbReference type="Rhea" id="RHEA:20792"/>
        <dbReference type="Rhea" id="RHEA-COMP:9696"/>
        <dbReference type="Rhea" id="RHEA-COMP:9697"/>
        <dbReference type="ChEBI" id="CHEBI:30616"/>
        <dbReference type="ChEBI" id="CHEBI:32551"/>
        <dbReference type="ChEBI" id="CHEBI:33019"/>
        <dbReference type="ChEBI" id="CHEBI:78442"/>
        <dbReference type="ChEBI" id="CHEBI:78529"/>
        <dbReference type="ChEBI" id="CHEBI:456215"/>
        <dbReference type="EC" id="6.1.1.6"/>
    </reaction>
</comment>
<comment type="catalytic activity">
    <reaction>
        <text>L-lysyl-tRNA(Lys) + a 1,2-diacyl-sn-glycero-3-phospho-(1'-sn-glycerol) = a 1,2-diacyl-sn-glycero-3-phospho-1'-(3'-O-L-lysyl)-sn-glycerol + tRNA(Lys)</text>
        <dbReference type="Rhea" id="RHEA:10668"/>
        <dbReference type="Rhea" id="RHEA-COMP:9696"/>
        <dbReference type="Rhea" id="RHEA-COMP:9697"/>
        <dbReference type="ChEBI" id="CHEBI:64716"/>
        <dbReference type="ChEBI" id="CHEBI:75792"/>
        <dbReference type="ChEBI" id="CHEBI:78442"/>
        <dbReference type="ChEBI" id="CHEBI:78529"/>
        <dbReference type="EC" id="2.3.2.3"/>
    </reaction>
</comment>
<comment type="cofactor">
    <cofactor evidence="1">
        <name>Mg(2+)</name>
        <dbReference type="ChEBI" id="CHEBI:18420"/>
    </cofactor>
    <text evidence="1">Binds 3 Mg(2+) ions per subunit.</text>
</comment>
<comment type="subcellular location">
    <subcellularLocation>
        <location evidence="4">Cell membrane</location>
        <topology evidence="4">Multi-pass membrane protein</topology>
    </subcellularLocation>
</comment>
<comment type="miscellaneous">
    <text>There are two lysyl-tRNA ligases in M.bovis.</text>
</comment>
<comment type="similarity">
    <text evidence="4">In the N-terminal section; belongs to the LPG synthetase family.</text>
</comment>
<comment type="similarity">
    <text evidence="4">In the C-terminal section; belongs to the class-II aminoacyl-tRNA synthetase family.</text>
</comment>
<keyword id="KW-0030">Aminoacyl-tRNA synthetase</keyword>
<keyword id="KW-0046">Antibiotic resistance</keyword>
<keyword id="KW-0067">ATP-binding</keyword>
<keyword id="KW-1003">Cell membrane</keyword>
<keyword id="KW-0238">DNA-binding</keyword>
<keyword id="KW-0436">Ligase</keyword>
<keyword id="KW-0443">Lipid metabolism</keyword>
<keyword id="KW-0460">Magnesium</keyword>
<keyword id="KW-0472">Membrane</keyword>
<keyword id="KW-0479">Metal-binding</keyword>
<keyword id="KW-0511">Multifunctional enzyme</keyword>
<keyword id="KW-0547">Nucleotide-binding</keyword>
<keyword id="KW-1185">Reference proteome</keyword>
<keyword id="KW-0808">Transferase</keyword>
<keyword id="KW-0812">Transmembrane</keyword>
<keyword id="KW-1133">Transmembrane helix</keyword>
<keyword id="KW-0843">Virulence</keyword>
<gene>
    <name type="primary">lysX</name>
    <name type="synonym">lysS2</name>
    <name type="ordered locus">BQ2027_MB1667C</name>
</gene>
<dbReference type="EC" id="6.1.1.6"/>
<dbReference type="EC" id="2.3.2.3"/>
<dbReference type="EMBL" id="LT708304">
    <property type="protein sequence ID" value="SIU00271.1"/>
    <property type="molecule type" value="Genomic_DNA"/>
</dbReference>
<dbReference type="RefSeq" id="NP_855320.1">
    <property type="nucleotide sequence ID" value="NC_002945.3"/>
</dbReference>
<dbReference type="SMR" id="Q7VEV7"/>
<dbReference type="KEGG" id="mbo:BQ2027_MB1667C"/>
<dbReference type="PATRIC" id="fig|233413.5.peg.1820"/>
<dbReference type="Proteomes" id="UP000001419">
    <property type="component" value="Chromosome"/>
</dbReference>
<dbReference type="GO" id="GO:0005829">
    <property type="term" value="C:cytosol"/>
    <property type="evidence" value="ECO:0007669"/>
    <property type="project" value="TreeGrafter"/>
</dbReference>
<dbReference type="GO" id="GO:0005886">
    <property type="term" value="C:plasma membrane"/>
    <property type="evidence" value="ECO:0007669"/>
    <property type="project" value="UniProtKB-SubCell"/>
</dbReference>
<dbReference type="GO" id="GO:0005524">
    <property type="term" value="F:ATP binding"/>
    <property type="evidence" value="ECO:0007669"/>
    <property type="project" value="UniProtKB-UniRule"/>
</dbReference>
<dbReference type="GO" id="GO:0003677">
    <property type="term" value="F:DNA binding"/>
    <property type="evidence" value="ECO:0007669"/>
    <property type="project" value="UniProtKB-KW"/>
</dbReference>
<dbReference type="GO" id="GO:0004824">
    <property type="term" value="F:lysine-tRNA ligase activity"/>
    <property type="evidence" value="ECO:0007669"/>
    <property type="project" value="UniProtKB-UniRule"/>
</dbReference>
<dbReference type="GO" id="GO:0000287">
    <property type="term" value="F:magnesium ion binding"/>
    <property type="evidence" value="ECO:0007669"/>
    <property type="project" value="UniProtKB-UniRule"/>
</dbReference>
<dbReference type="GO" id="GO:0050071">
    <property type="term" value="F:phosphatidylglycerol lysyltransferase activity"/>
    <property type="evidence" value="ECO:0007669"/>
    <property type="project" value="UniProtKB-EC"/>
</dbReference>
<dbReference type="GO" id="GO:0000049">
    <property type="term" value="F:tRNA binding"/>
    <property type="evidence" value="ECO:0007669"/>
    <property type="project" value="TreeGrafter"/>
</dbReference>
<dbReference type="GO" id="GO:0006629">
    <property type="term" value="P:lipid metabolic process"/>
    <property type="evidence" value="ECO:0007669"/>
    <property type="project" value="UniProtKB-KW"/>
</dbReference>
<dbReference type="GO" id="GO:0006430">
    <property type="term" value="P:lysyl-tRNA aminoacylation"/>
    <property type="evidence" value="ECO:0007669"/>
    <property type="project" value="UniProtKB-UniRule"/>
</dbReference>
<dbReference type="GO" id="GO:0046677">
    <property type="term" value="P:response to antibiotic"/>
    <property type="evidence" value="ECO:0007669"/>
    <property type="project" value="UniProtKB-KW"/>
</dbReference>
<dbReference type="CDD" id="cd04322">
    <property type="entry name" value="LysRS_N"/>
    <property type="match status" value="1"/>
</dbReference>
<dbReference type="FunFam" id="2.40.50.140:FF:000404">
    <property type="entry name" value="Lysylphosphatidylglycerol biosynthesis bifunctional protein LysX"/>
    <property type="match status" value="1"/>
</dbReference>
<dbReference type="Gene3D" id="3.30.930.10">
    <property type="entry name" value="Bira Bifunctional Protein, Domain 2"/>
    <property type="match status" value="1"/>
</dbReference>
<dbReference type="Gene3D" id="2.40.50.140">
    <property type="entry name" value="Nucleic acid-binding proteins"/>
    <property type="match status" value="1"/>
</dbReference>
<dbReference type="HAMAP" id="MF_00252">
    <property type="entry name" value="Lys_tRNA_synth_class2"/>
    <property type="match status" value="1"/>
</dbReference>
<dbReference type="InterPro" id="IPR004364">
    <property type="entry name" value="Aa-tRNA-synt_II"/>
</dbReference>
<dbReference type="InterPro" id="IPR006195">
    <property type="entry name" value="aa-tRNA-synth_II"/>
</dbReference>
<dbReference type="InterPro" id="IPR045864">
    <property type="entry name" value="aa-tRNA-synth_II/BPL/LPL"/>
</dbReference>
<dbReference type="InterPro" id="IPR024320">
    <property type="entry name" value="LPG_synthase_C"/>
</dbReference>
<dbReference type="InterPro" id="IPR002313">
    <property type="entry name" value="Lys-tRNA-ligase_II"/>
</dbReference>
<dbReference type="InterPro" id="IPR044136">
    <property type="entry name" value="Lys-tRNA-ligase_II_N"/>
</dbReference>
<dbReference type="InterPro" id="IPR018149">
    <property type="entry name" value="Lys-tRNA-synth_II_C"/>
</dbReference>
<dbReference type="InterPro" id="IPR012340">
    <property type="entry name" value="NA-bd_OB-fold"/>
</dbReference>
<dbReference type="InterPro" id="IPR004365">
    <property type="entry name" value="NA-bd_OB_tRNA"/>
</dbReference>
<dbReference type="InterPro" id="IPR031553">
    <property type="entry name" value="tRNA-synt_2_TM"/>
</dbReference>
<dbReference type="NCBIfam" id="TIGR00499">
    <property type="entry name" value="lysS_bact"/>
    <property type="match status" value="1"/>
</dbReference>
<dbReference type="NCBIfam" id="NF001756">
    <property type="entry name" value="PRK00484.1"/>
    <property type="match status" value="1"/>
</dbReference>
<dbReference type="NCBIfam" id="NF002821">
    <property type="entry name" value="PRK02983.1"/>
    <property type="match status" value="1"/>
</dbReference>
<dbReference type="PANTHER" id="PTHR42918:SF15">
    <property type="entry name" value="LYSINE--TRNA LIGASE, CHLOROPLASTIC_MITOCHONDRIAL"/>
    <property type="match status" value="1"/>
</dbReference>
<dbReference type="PANTHER" id="PTHR42918">
    <property type="entry name" value="LYSYL-TRNA SYNTHETASE"/>
    <property type="match status" value="1"/>
</dbReference>
<dbReference type="Pfam" id="PF09924">
    <property type="entry name" value="LPG_synthase_C"/>
    <property type="match status" value="1"/>
</dbReference>
<dbReference type="Pfam" id="PF00152">
    <property type="entry name" value="tRNA-synt_2"/>
    <property type="match status" value="1"/>
</dbReference>
<dbReference type="Pfam" id="PF16995">
    <property type="entry name" value="tRNA-synt_2_TM"/>
    <property type="match status" value="1"/>
</dbReference>
<dbReference type="Pfam" id="PF01336">
    <property type="entry name" value="tRNA_anti-codon"/>
    <property type="match status" value="1"/>
</dbReference>
<dbReference type="PRINTS" id="PR00982">
    <property type="entry name" value="TRNASYNTHLYS"/>
</dbReference>
<dbReference type="SUPFAM" id="SSF55681">
    <property type="entry name" value="Class II aaRS and biotin synthetases"/>
    <property type="match status" value="1"/>
</dbReference>
<dbReference type="SUPFAM" id="SSF50249">
    <property type="entry name" value="Nucleic acid-binding proteins"/>
    <property type="match status" value="1"/>
</dbReference>
<dbReference type="PROSITE" id="PS50862">
    <property type="entry name" value="AA_TRNA_LIGASE_II"/>
    <property type="match status" value="1"/>
</dbReference>
<evidence type="ECO:0000250" key="1"/>
<evidence type="ECO:0000255" key="2"/>
<evidence type="ECO:0000256" key="3">
    <source>
        <dbReference type="SAM" id="MobiDB-lite"/>
    </source>
</evidence>
<evidence type="ECO:0000305" key="4"/>
<accession>Q7VEV7</accession>
<accession>A0A1R3XYV2</accession>
<accession>X2BII9</accession>